<dbReference type="EC" id="5.4.2.12" evidence="1"/>
<dbReference type="EMBL" id="CP000140">
    <property type="protein sequence ID" value="ABR44375.1"/>
    <property type="molecule type" value="Genomic_DNA"/>
</dbReference>
<dbReference type="RefSeq" id="WP_011966935.1">
    <property type="nucleotide sequence ID" value="NC_009615.1"/>
</dbReference>
<dbReference type="SMR" id="A6LFB1"/>
<dbReference type="STRING" id="435591.BDI_2656"/>
<dbReference type="PaxDb" id="435591-BDI_2656"/>
<dbReference type="KEGG" id="pdi:BDI_2656"/>
<dbReference type="eggNOG" id="COG0696">
    <property type="taxonomic scope" value="Bacteria"/>
</dbReference>
<dbReference type="HOGENOM" id="CLU_026099_2_0_10"/>
<dbReference type="BioCyc" id="PDIS435591:G1G5A-2730-MONOMER"/>
<dbReference type="UniPathway" id="UPA00109">
    <property type="reaction ID" value="UER00186"/>
</dbReference>
<dbReference type="Proteomes" id="UP000000566">
    <property type="component" value="Chromosome"/>
</dbReference>
<dbReference type="GO" id="GO:0005829">
    <property type="term" value="C:cytosol"/>
    <property type="evidence" value="ECO:0007669"/>
    <property type="project" value="TreeGrafter"/>
</dbReference>
<dbReference type="GO" id="GO:0030145">
    <property type="term" value="F:manganese ion binding"/>
    <property type="evidence" value="ECO:0007669"/>
    <property type="project" value="UniProtKB-UniRule"/>
</dbReference>
<dbReference type="GO" id="GO:0004619">
    <property type="term" value="F:phosphoglycerate mutase activity"/>
    <property type="evidence" value="ECO:0007669"/>
    <property type="project" value="UniProtKB-EC"/>
</dbReference>
<dbReference type="GO" id="GO:0006007">
    <property type="term" value="P:glucose catabolic process"/>
    <property type="evidence" value="ECO:0007669"/>
    <property type="project" value="InterPro"/>
</dbReference>
<dbReference type="GO" id="GO:0006096">
    <property type="term" value="P:glycolytic process"/>
    <property type="evidence" value="ECO:0007669"/>
    <property type="project" value="UniProtKB-UniRule"/>
</dbReference>
<dbReference type="CDD" id="cd16010">
    <property type="entry name" value="iPGM"/>
    <property type="match status" value="1"/>
</dbReference>
<dbReference type="FunFam" id="3.40.1450.10:FF:000002">
    <property type="entry name" value="2,3-bisphosphoglycerate-independent phosphoglycerate mutase"/>
    <property type="match status" value="1"/>
</dbReference>
<dbReference type="Gene3D" id="3.40.720.10">
    <property type="entry name" value="Alkaline Phosphatase, subunit A"/>
    <property type="match status" value="1"/>
</dbReference>
<dbReference type="Gene3D" id="3.40.1450.10">
    <property type="entry name" value="BPG-independent phosphoglycerate mutase, domain B"/>
    <property type="match status" value="1"/>
</dbReference>
<dbReference type="HAMAP" id="MF_01038">
    <property type="entry name" value="GpmI"/>
    <property type="match status" value="1"/>
</dbReference>
<dbReference type="InterPro" id="IPR017850">
    <property type="entry name" value="Alkaline_phosphatase_core_sf"/>
</dbReference>
<dbReference type="InterPro" id="IPR011258">
    <property type="entry name" value="BPG-indep_PGM_N"/>
</dbReference>
<dbReference type="InterPro" id="IPR006124">
    <property type="entry name" value="Metalloenzyme"/>
</dbReference>
<dbReference type="InterPro" id="IPR036646">
    <property type="entry name" value="PGAM_B_sf"/>
</dbReference>
<dbReference type="InterPro" id="IPR005995">
    <property type="entry name" value="Pgm_bpd_ind"/>
</dbReference>
<dbReference type="NCBIfam" id="TIGR01307">
    <property type="entry name" value="pgm_bpd_ind"/>
    <property type="match status" value="1"/>
</dbReference>
<dbReference type="PANTHER" id="PTHR31637">
    <property type="entry name" value="2,3-BISPHOSPHOGLYCERATE-INDEPENDENT PHOSPHOGLYCERATE MUTASE"/>
    <property type="match status" value="1"/>
</dbReference>
<dbReference type="PANTHER" id="PTHR31637:SF0">
    <property type="entry name" value="2,3-BISPHOSPHOGLYCERATE-INDEPENDENT PHOSPHOGLYCERATE MUTASE"/>
    <property type="match status" value="1"/>
</dbReference>
<dbReference type="Pfam" id="PF06415">
    <property type="entry name" value="iPGM_N"/>
    <property type="match status" value="1"/>
</dbReference>
<dbReference type="Pfam" id="PF01676">
    <property type="entry name" value="Metalloenzyme"/>
    <property type="match status" value="1"/>
</dbReference>
<dbReference type="PIRSF" id="PIRSF001492">
    <property type="entry name" value="IPGAM"/>
    <property type="match status" value="1"/>
</dbReference>
<dbReference type="SUPFAM" id="SSF64158">
    <property type="entry name" value="2,3-Bisphosphoglycerate-independent phosphoglycerate mutase, substrate-binding domain"/>
    <property type="match status" value="1"/>
</dbReference>
<dbReference type="SUPFAM" id="SSF53649">
    <property type="entry name" value="Alkaline phosphatase-like"/>
    <property type="match status" value="1"/>
</dbReference>
<organism>
    <name type="scientific">Parabacteroides distasonis (strain ATCC 8503 / DSM 20701 / CIP 104284 / JCM 5825 / NCTC 11152)</name>
    <dbReference type="NCBI Taxonomy" id="435591"/>
    <lineage>
        <taxon>Bacteria</taxon>
        <taxon>Pseudomonadati</taxon>
        <taxon>Bacteroidota</taxon>
        <taxon>Bacteroidia</taxon>
        <taxon>Bacteroidales</taxon>
        <taxon>Tannerellaceae</taxon>
        <taxon>Parabacteroides</taxon>
    </lineage>
</organism>
<sequence length="507" mass="56229">MSKKALLIICDGWGIGDKGKDDVIFNTPTPYWDELLKTYPASQLQASGENVGLPDGQMGNSEVGHLNIGAGRIVYQDLVKINIACRENTIMENPEIKRAYSYAKENNKQIHFMGLVSDGGVHSSLEHLLKLTDIAKEYGISKAYVHCFMDGRDTDPKSGKGFIEELENHLKTTGGKIASIIGRYYAMDRDKRWERVKEAYDLLVEGKGKQAECMVKAMEESYAEGVTDEFIKPIVHVENGKPVAVIEEGDVVIFFNYRNDRAKELTVVLTQQDMPEAGMHTIPGLQYFCMTPYDASFKGVHILFDKENVNNTLGEFLANVGKTQLHIAETEKYAHVTFFFNGGRETPFDSEERILVPSPKVATYDLKPEMSAFEVKDKLVDAINTKKFDFIVVNYANGDMVGHTGIYKAIEKAVVTIDACLHDTVEAAKANDYEVIIIADHGNADHALNEDGTPNTAHSLNPVPFVYVTANKDAKVEDGILADVAPSILHILGLKQPKEMTGKSLIK</sequence>
<reference key="1">
    <citation type="journal article" date="2007" name="PLoS Biol.">
        <title>Evolution of symbiotic bacteria in the distal human intestine.</title>
        <authorList>
            <person name="Xu J."/>
            <person name="Mahowald M.A."/>
            <person name="Ley R.E."/>
            <person name="Lozupone C.A."/>
            <person name="Hamady M."/>
            <person name="Martens E.C."/>
            <person name="Henrissat B."/>
            <person name="Coutinho P.M."/>
            <person name="Minx P."/>
            <person name="Latreille P."/>
            <person name="Cordum H."/>
            <person name="Van Brunt A."/>
            <person name="Kim K."/>
            <person name="Fulton R.S."/>
            <person name="Fulton L.A."/>
            <person name="Clifton S.W."/>
            <person name="Wilson R.K."/>
            <person name="Knight R.D."/>
            <person name="Gordon J.I."/>
        </authorList>
    </citation>
    <scope>NUCLEOTIDE SEQUENCE [LARGE SCALE GENOMIC DNA]</scope>
    <source>
        <strain>ATCC 8503 / DSM 20701 / CIP 104284 / JCM 5825 / NCTC 11152</strain>
    </source>
</reference>
<protein>
    <recommendedName>
        <fullName evidence="1">2,3-bisphosphoglycerate-independent phosphoglycerate mutase</fullName>
        <shortName evidence="1">BPG-independent PGAM</shortName>
        <shortName evidence="1">Phosphoglyceromutase</shortName>
        <shortName evidence="1">iPGM</shortName>
        <ecNumber evidence="1">5.4.2.12</ecNumber>
    </recommendedName>
</protein>
<gene>
    <name evidence="1" type="primary">gpmI</name>
    <name type="ordered locus">BDI_2656</name>
</gene>
<feature type="chain" id="PRO_1000063982" description="2,3-bisphosphoglycerate-independent phosphoglycerate mutase">
    <location>
        <begin position="1"/>
        <end position="507"/>
    </location>
</feature>
<feature type="active site" description="Phosphoserine intermediate" evidence="1">
    <location>
        <position position="61"/>
    </location>
</feature>
<feature type="binding site" evidence="1">
    <location>
        <position position="11"/>
    </location>
    <ligand>
        <name>Mn(2+)</name>
        <dbReference type="ChEBI" id="CHEBI:29035"/>
        <label>2</label>
    </ligand>
</feature>
<feature type="binding site" evidence="1">
    <location>
        <position position="61"/>
    </location>
    <ligand>
        <name>Mn(2+)</name>
        <dbReference type="ChEBI" id="CHEBI:29035"/>
        <label>2</label>
    </ligand>
</feature>
<feature type="binding site" evidence="1">
    <location>
        <position position="122"/>
    </location>
    <ligand>
        <name>substrate</name>
    </ligand>
</feature>
<feature type="binding site" evidence="1">
    <location>
        <begin position="152"/>
        <end position="153"/>
    </location>
    <ligand>
        <name>substrate</name>
    </ligand>
</feature>
<feature type="binding site" evidence="1">
    <location>
        <position position="183"/>
    </location>
    <ligand>
        <name>substrate</name>
    </ligand>
</feature>
<feature type="binding site" evidence="1">
    <location>
        <position position="189"/>
    </location>
    <ligand>
        <name>substrate</name>
    </ligand>
</feature>
<feature type="binding site" evidence="1">
    <location>
        <begin position="258"/>
        <end position="261"/>
    </location>
    <ligand>
        <name>substrate</name>
    </ligand>
</feature>
<feature type="binding site" evidence="1">
    <location>
        <position position="332"/>
    </location>
    <ligand>
        <name>substrate</name>
    </ligand>
</feature>
<feature type="binding site" evidence="1">
    <location>
        <position position="399"/>
    </location>
    <ligand>
        <name>Mn(2+)</name>
        <dbReference type="ChEBI" id="CHEBI:29035"/>
        <label>1</label>
    </ligand>
</feature>
<feature type="binding site" evidence="1">
    <location>
        <position position="403"/>
    </location>
    <ligand>
        <name>Mn(2+)</name>
        <dbReference type="ChEBI" id="CHEBI:29035"/>
        <label>1</label>
    </ligand>
</feature>
<feature type="binding site" evidence="1">
    <location>
        <position position="440"/>
    </location>
    <ligand>
        <name>Mn(2+)</name>
        <dbReference type="ChEBI" id="CHEBI:29035"/>
        <label>2</label>
    </ligand>
</feature>
<feature type="binding site" evidence="1">
    <location>
        <position position="441"/>
    </location>
    <ligand>
        <name>Mn(2+)</name>
        <dbReference type="ChEBI" id="CHEBI:29035"/>
        <label>2</label>
    </ligand>
</feature>
<feature type="binding site" evidence="1">
    <location>
        <position position="458"/>
    </location>
    <ligand>
        <name>Mn(2+)</name>
        <dbReference type="ChEBI" id="CHEBI:29035"/>
        <label>1</label>
    </ligand>
</feature>
<name>GPMI_PARD8</name>
<accession>A6LFB1</accession>
<proteinExistence type="inferred from homology"/>
<evidence type="ECO:0000255" key="1">
    <source>
        <dbReference type="HAMAP-Rule" id="MF_01038"/>
    </source>
</evidence>
<comment type="function">
    <text evidence="1">Catalyzes the interconversion of 2-phosphoglycerate and 3-phosphoglycerate.</text>
</comment>
<comment type="catalytic activity">
    <reaction evidence="1">
        <text>(2R)-2-phosphoglycerate = (2R)-3-phosphoglycerate</text>
        <dbReference type="Rhea" id="RHEA:15901"/>
        <dbReference type="ChEBI" id="CHEBI:58272"/>
        <dbReference type="ChEBI" id="CHEBI:58289"/>
        <dbReference type="EC" id="5.4.2.12"/>
    </reaction>
</comment>
<comment type="cofactor">
    <cofactor evidence="1">
        <name>Mn(2+)</name>
        <dbReference type="ChEBI" id="CHEBI:29035"/>
    </cofactor>
    <text evidence="1">Binds 2 manganese ions per subunit.</text>
</comment>
<comment type="pathway">
    <text evidence="1">Carbohydrate degradation; glycolysis; pyruvate from D-glyceraldehyde 3-phosphate: step 3/5.</text>
</comment>
<comment type="subunit">
    <text evidence="1">Monomer.</text>
</comment>
<comment type="similarity">
    <text evidence="1">Belongs to the BPG-independent phosphoglycerate mutase family.</text>
</comment>
<keyword id="KW-0324">Glycolysis</keyword>
<keyword id="KW-0413">Isomerase</keyword>
<keyword id="KW-0464">Manganese</keyword>
<keyword id="KW-0479">Metal-binding</keyword>
<keyword id="KW-1185">Reference proteome</keyword>